<keyword id="KW-1185">Reference proteome</keyword>
<gene>
    <name type="ordered locus">MIMI_L32</name>
</gene>
<reference key="1">
    <citation type="journal article" date="2004" name="Science">
        <title>The 1.2-megabase genome sequence of Mimivirus.</title>
        <authorList>
            <person name="Raoult D."/>
            <person name="Audic S."/>
            <person name="Robert C."/>
            <person name="Abergel C."/>
            <person name="Renesto P."/>
            <person name="Ogata H."/>
            <person name="La Scola B."/>
            <person name="Susan M."/>
            <person name="Claverie J.-M."/>
        </authorList>
    </citation>
    <scope>NUCLEOTIDE SEQUENCE [LARGE SCALE GENOMIC DNA]</scope>
    <source>
        <strain>Rowbotham-Bradford</strain>
    </source>
</reference>
<sequence>MPHKAPKSKLFRTRYVEDSDDETRGRSRNRSVEKSRSKSLTRSKSKSPKKSRSKSLDRSKNVKTTKSKNTNKSNKYTEEDSEDSEDSESDQDDDKSDNEQSDSELDDSESDDDETDDNESDNDKSKDNFENIIESKENDFRNIIFENINEKFAIGKFGDFEVIINRDNGYINATQLCKDCGKDYKNWNQNEKSREFVKKLSQYTGLSNTNLLTKIIGGNNVKLRGTYVHPIILTNIGNWISPTFAIKIGEWIEEWKKFSRKNTLKYYKELSKIELYSNNDKEKQIQLALQKSLGGKIEVRTKHGYVDLLTKDKIIEIKSYDNWKHALGQILAYGELYENKNKCIYLFDIPSKNEIANIKIILKKFGISLLCI</sequence>
<protein>
    <recommendedName>
        <fullName>Putative KilA-N domain-containing protein L32</fullName>
    </recommendedName>
</protein>
<name>YL032_MIMIV</name>
<evidence type="ECO:0000255" key="1">
    <source>
        <dbReference type="PROSITE-ProRule" id="PRU00631"/>
    </source>
</evidence>
<evidence type="ECO:0000256" key="2">
    <source>
        <dbReference type="SAM" id="MobiDB-lite"/>
    </source>
</evidence>
<organismHost>
    <name type="scientific">Acanthamoeba polyphaga</name>
    <name type="common">Amoeba</name>
    <dbReference type="NCBI Taxonomy" id="5757"/>
</organismHost>
<organism>
    <name type="scientific">Acanthamoeba polyphaga mimivirus</name>
    <name type="common">APMV</name>
    <dbReference type="NCBI Taxonomy" id="212035"/>
    <lineage>
        <taxon>Viruses</taxon>
        <taxon>Varidnaviria</taxon>
        <taxon>Bamfordvirae</taxon>
        <taxon>Nucleocytoviricota</taxon>
        <taxon>Megaviricetes</taxon>
        <taxon>Imitervirales</taxon>
        <taxon>Mimiviridae</taxon>
        <taxon>Megamimivirinae</taxon>
        <taxon>Mimivirus</taxon>
        <taxon>Mimivirus bradfordmassiliense</taxon>
    </lineage>
</organism>
<proteinExistence type="predicted"/>
<accession>Q5UPA5</accession>
<feature type="chain" id="PRO_0000247417" description="Putative KilA-N domain-containing protein L32">
    <location>
        <begin position="1"/>
        <end position="372"/>
    </location>
</feature>
<feature type="domain" description="KilA-N" evidence="1">
    <location>
        <begin position="151"/>
        <end position="255"/>
    </location>
</feature>
<feature type="region of interest" description="Disordered" evidence="2">
    <location>
        <begin position="1"/>
        <end position="129"/>
    </location>
</feature>
<feature type="compositionally biased region" description="Basic residues" evidence="2">
    <location>
        <begin position="1"/>
        <end position="12"/>
    </location>
</feature>
<feature type="compositionally biased region" description="Basic and acidic residues" evidence="2">
    <location>
        <begin position="14"/>
        <end position="36"/>
    </location>
</feature>
<feature type="compositionally biased region" description="Basic residues" evidence="2">
    <location>
        <begin position="37"/>
        <end position="53"/>
    </location>
</feature>
<feature type="compositionally biased region" description="Acidic residues" evidence="2">
    <location>
        <begin position="79"/>
        <end position="120"/>
    </location>
</feature>
<dbReference type="EMBL" id="AY653733">
    <property type="protein sequence ID" value="AAV50307.1"/>
    <property type="molecule type" value="Genomic_DNA"/>
</dbReference>
<dbReference type="SMR" id="Q5UPA5"/>
<dbReference type="KEGG" id="vg:9924610"/>
<dbReference type="OrthoDB" id="28003at10239"/>
<dbReference type="Proteomes" id="UP000001134">
    <property type="component" value="Genome"/>
</dbReference>
<dbReference type="GO" id="GO:0003677">
    <property type="term" value="F:DNA binding"/>
    <property type="evidence" value="ECO:0007669"/>
    <property type="project" value="InterPro"/>
</dbReference>
<dbReference type="InterPro" id="IPR036887">
    <property type="entry name" value="HTH_APSES_sf"/>
</dbReference>
<dbReference type="InterPro" id="IPR018004">
    <property type="entry name" value="KilA/APSES_HTH"/>
</dbReference>
<dbReference type="InterPro" id="IPR017880">
    <property type="entry name" value="KilA_N"/>
</dbReference>
<dbReference type="Pfam" id="PF04383">
    <property type="entry name" value="KilA-N"/>
    <property type="match status" value="1"/>
</dbReference>
<dbReference type="SMART" id="SM01252">
    <property type="entry name" value="KilA-N"/>
    <property type="match status" value="1"/>
</dbReference>
<dbReference type="SUPFAM" id="SSF54616">
    <property type="entry name" value="DNA-binding domain of Mlu1-box binding protein MBP1"/>
    <property type="match status" value="1"/>
</dbReference>
<dbReference type="PROSITE" id="PS51301">
    <property type="entry name" value="KILA_N"/>
    <property type="match status" value="1"/>
</dbReference>